<keyword id="KW-0963">Cytoplasm</keyword>
<keyword id="KW-0251">Elongation factor</keyword>
<keyword id="KW-0342">GTP-binding</keyword>
<keyword id="KW-0488">Methylation</keyword>
<keyword id="KW-0547">Nucleotide-binding</keyword>
<keyword id="KW-0648">Protein biosynthesis</keyword>
<keyword id="KW-1185">Reference proteome</keyword>
<feature type="initiator methionine" description="Removed" evidence="2">
    <location>
        <position position="1"/>
    </location>
</feature>
<feature type="chain" id="PRO_0000090958" description="Elongation factor 1-alpha">
    <location>
        <begin position="2"/>
        <end position="459"/>
    </location>
</feature>
<feature type="domain" description="tr-type G">
    <location>
        <begin position="5"/>
        <end position="240"/>
    </location>
</feature>
<feature type="region of interest" description="G1" evidence="1">
    <location>
        <begin position="14"/>
        <end position="21"/>
    </location>
</feature>
<feature type="region of interest" description="G2" evidence="1">
    <location>
        <begin position="70"/>
        <end position="74"/>
    </location>
</feature>
<feature type="region of interest" description="G3" evidence="1">
    <location>
        <begin position="91"/>
        <end position="94"/>
    </location>
</feature>
<feature type="region of interest" description="G4" evidence="1">
    <location>
        <begin position="153"/>
        <end position="156"/>
    </location>
</feature>
<feature type="region of interest" description="G5" evidence="1">
    <location>
        <begin position="192"/>
        <end position="194"/>
    </location>
</feature>
<feature type="binding site" evidence="1">
    <location>
        <begin position="14"/>
        <end position="21"/>
    </location>
    <ligand>
        <name>GTP</name>
        <dbReference type="ChEBI" id="CHEBI:37565"/>
    </ligand>
</feature>
<feature type="binding site" evidence="1">
    <location>
        <begin position="91"/>
        <end position="95"/>
    </location>
    <ligand>
        <name>GTP</name>
        <dbReference type="ChEBI" id="CHEBI:37565"/>
    </ligand>
</feature>
<feature type="binding site" evidence="1">
    <location>
        <begin position="153"/>
        <end position="156"/>
    </location>
    <ligand>
        <name>GTP</name>
        <dbReference type="ChEBI" id="CHEBI:37565"/>
    </ligand>
</feature>
<feature type="modified residue" description="N,N,N-trimethylglycine" evidence="2">
    <location>
        <position position="2"/>
    </location>
</feature>
<feature type="modified residue" description="N6,N6-dimethyllysine; alternate" evidence="2">
    <location>
        <position position="3"/>
    </location>
</feature>
<feature type="modified residue" description="N6-methyllysine; alternate" evidence="2">
    <location>
        <position position="3"/>
    </location>
</feature>
<feature type="modified residue" description="N6-methyllysine" evidence="2">
    <location>
        <position position="30"/>
    </location>
</feature>
<feature type="modified residue" description="N6,N6,N6-trimethyllysine" evidence="2">
    <location>
        <position position="79"/>
    </location>
</feature>
<feature type="modified residue" description="N6,N6-dimethyllysine; alternate" evidence="2">
    <location>
        <position position="316"/>
    </location>
</feature>
<feature type="modified residue" description="N6-methyllysine; alternate" evidence="2">
    <location>
        <position position="316"/>
    </location>
</feature>
<feature type="modified residue" description="N6-methyllysine" evidence="2">
    <location>
        <position position="390"/>
    </location>
</feature>
<reference key="1">
    <citation type="journal article" date="2005" name="Science">
        <title>The genome of the basidiomycetous yeast and human pathogen Cryptococcus neoformans.</title>
        <authorList>
            <person name="Loftus B.J."/>
            <person name="Fung E."/>
            <person name="Roncaglia P."/>
            <person name="Rowley D."/>
            <person name="Amedeo P."/>
            <person name="Bruno D."/>
            <person name="Vamathevan J."/>
            <person name="Miranda M."/>
            <person name="Anderson I.J."/>
            <person name="Fraser J.A."/>
            <person name="Allen J.E."/>
            <person name="Bosdet I.E."/>
            <person name="Brent M.R."/>
            <person name="Chiu R."/>
            <person name="Doering T.L."/>
            <person name="Donlin M.J."/>
            <person name="D'Souza C.A."/>
            <person name="Fox D.S."/>
            <person name="Grinberg V."/>
            <person name="Fu J."/>
            <person name="Fukushima M."/>
            <person name="Haas B.J."/>
            <person name="Huang J.C."/>
            <person name="Janbon G."/>
            <person name="Jones S.J.M."/>
            <person name="Koo H.L."/>
            <person name="Krzywinski M.I."/>
            <person name="Kwon-Chung K.J."/>
            <person name="Lengeler K.B."/>
            <person name="Maiti R."/>
            <person name="Marra M.A."/>
            <person name="Marra R.E."/>
            <person name="Mathewson C.A."/>
            <person name="Mitchell T.G."/>
            <person name="Pertea M."/>
            <person name="Riggs F.R."/>
            <person name="Salzberg S.L."/>
            <person name="Schein J.E."/>
            <person name="Shvartsbeyn A."/>
            <person name="Shin H."/>
            <person name="Shumway M."/>
            <person name="Specht C.A."/>
            <person name="Suh B.B."/>
            <person name="Tenney A."/>
            <person name="Utterback T.R."/>
            <person name="Wickes B.L."/>
            <person name="Wortman J.R."/>
            <person name="Wye N.H."/>
            <person name="Kronstad J.W."/>
            <person name="Lodge J.K."/>
            <person name="Heitman J."/>
            <person name="Davis R.W."/>
            <person name="Fraser C.M."/>
            <person name="Hyman R.W."/>
        </authorList>
    </citation>
    <scope>NUCLEOTIDE SEQUENCE [LARGE SCALE GENOMIC DNA]</scope>
    <source>
        <strain>JEC21 / ATCC MYA-565</strain>
    </source>
</reference>
<comment type="function">
    <text>This protein promotes the GTP-dependent binding of aminoacyl-tRNA to the A-site of ribosomes during protein biosynthesis.</text>
</comment>
<comment type="subcellular location">
    <subcellularLocation>
        <location>Cytoplasm</location>
    </subcellularLocation>
</comment>
<comment type="similarity">
    <text evidence="3">Belongs to the TRAFAC class translation factor GTPase superfamily. Classic translation factor GTPase family. EF-Tu/EF-1A subfamily.</text>
</comment>
<protein>
    <recommendedName>
        <fullName>Elongation factor 1-alpha</fullName>
        <shortName>EF-1-alpha</shortName>
    </recommendedName>
</protein>
<gene>
    <name type="primary">TEF1</name>
    <name type="ordered locus">CNM01300</name>
</gene>
<proteinExistence type="inferred from homology"/>
<organism>
    <name type="scientific">Cryptococcus neoformans var. neoformans serotype D (strain JEC21 / ATCC MYA-565)</name>
    <name type="common">Filobasidiella neoformans</name>
    <dbReference type="NCBI Taxonomy" id="214684"/>
    <lineage>
        <taxon>Eukaryota</taxon>
        <taxon>Fungi</taxon>
        <taxon>Dikarya</taxon>
        <taxon>Basidiomycota</taxon>
        <taxon>Agaricomycotina</taxon>
        <taxon>Tremellomycetes</taxon>
        <taxon>Tremellales</taxon>
        <taxon>Cryptococcaceae</taxon>
        <taxon>Cryptococcus</taxon>
        <taxon>Cryptococcus neoformans species complex</taxon>
    </lineage>
</organism>
<dbReference type="EMBL" id="AE017353">
    <property type="protein sequence ID" value="AAW46945.1"/>
    <property type="molecule type" value="Genomic_DNA"/>
</dbReference>
<dbReference type="RefSeq" id="XP_568462.1">
    <property type="nucleotide sequence ID" value="XM_568462.1"/>
</dbReference>
<dbReference type="SMR" id="P0CN30"/>
<dbReference type="FunCoup" id="P0CN30">
    <property type="interactions" value="331"/>
</dbReference>
<dbReference type="STRING" id="214684.P0CN30"/>
<dbReference type="PaxDb" id="214684-P0CN30"/>
<dbReference type="EnsemblFungi" id="AAW46945">
    <property type="protein sequence ID" value="AAW46945"/>
    <property type="gene ID" value="CNM01300"/>
</dbReference>
<dbReference type="GeneID" id="3255123"/>
<dbReference type="KEGG" id="cne:CNM01300"/>
<dbReference type="VEuPathDB" id="FungiDB:CNM01300"/>
<dbReference type="eggNOG" id="KOG0052">
    <property type="taxonomic scope" value="Eukaryota"/>
</dbReference>
<dbReference type="HOGENOM" id="CLU_007265_3_5_1"/>
<dbReference type="InParanoid" id="P0CN30"/>
<dbReference type="OMA" id="AIRDMGM"/>
<dbReference type="OrthoDB" id="342024at2759"/>
<dbReference type="Proteomes" id="UP000002149">
    <property type="component" value="Chromosome 13"/>
</dbReference>
<dbReference type="GO" id="GO:0005737">
    <property type="term" value="C:cytoplasm"/>
    <property type="evidence" value="ECO:0007669"/>
    <property type="project" value="UniProtKB-SubCell"/>
</dbReference>
<dbReference type="GO" id="GO:0005525">
    <property type="term" value="F:GTP binding"/>
    <property type="evidence" value="ECO:0007669"/>
    <property type="project" value="UniProtKB-KW"/>
</dbReference>
<dbReference type="GO" id="GO:0003924">
    <property type="term" value="F:GTPase activity"/>
    <property type="evidence" value="ECO:0000318"/>
    <property type="project" value="GO_Central"/>
</dbReference>
<dbReference type="GO" id="GO:0003746">
    <property type="term" value="F:translation elongation factor activity"/>
    <property type="evidence" value="ECO:0000318"/>
    <property type="project" value="GO_Central"/>
</dbReference>
<dbReference type="GO" id="GO:0006412">
    <property type="term" value="P:translation"/>
    <property type="evidence" value="ECO:0000318"/>
    <property type="project" value="GO_Central"/>
</dbReference>
<dbReference type="GO" id="GO:0006414">
    <property type="term" value="P:translational elongation"/>
    <property type="evidence" value="ECO:0000318"/>
    <property type="project" value="GO_Central"/>
</dbReference>
<dbReference type="CDD" id="cd01883">
    <property type="entry name" value="EF1_alpha"/>
    <property type="match status" value="1"/>
</dbReference>
<dbReference type="CDD" id="cd03693">
    <property type="entry name" value="EF1_alpha_II"/>
    <property type="match status" value="1"/>
</dbReference>
<dbReference type="CDD" id="cd03705">
    <property type="entry name" value="EF1_alpha_III"/>
    <property type="match status" value="1"/>
</dbReference>
<dbReference type="FunFam" id="2.40.30.10:FF:000003">
    <property type="entry name" value="Elongation factor 1-alpha"/>
    <property type="match status" value="1"/>
</dbReference>
<dbReference type="FunFam" id="2.40.30.10:FF:000005">
    <property type="entry name" value="Elongation factor 1-alpha"/>
    <property type="match status" value="1"/>
</dbReference>
<dbReference type="FunFam" id="3.40.50.300:FF:000211">
    <property type="entry name" value="Elongation factor 1-alpha"/>
    <property type="match status" value="1"/>
</dbReference>
<dbReference type="Gene3D" id="3.40.50.300">
    <property type="entry name" value="P-loop containing nucleotide triphosphate hydrolases"/>
    <property type="match status" value="1"/>
</dbReference>
<dbReference type="Gene3D" id="2.40.30.10">
    <property type="entry name" value="Translation factors"/>
    <property type="match status" value="2"/>
</dbReference>
<dbReference type="HAMAP" id="MF_00118_A">
    <property type="entry name" value="EF_Tu_A"/>
    <property type="match status" value="1"/>
</dbReference>
<dbReference type="InterPro" id="IPR004161">
    <property type="entry name" value="EFTu-like_2"/>
</dbReference>
<dbReference type="InterPro" id="IPR031157">
    <property type="entry name" value="G_TR_CS"/>
</dbReference>
<dbReference type="InterPro" id="IPR054696">
    <property type="entry name" value="GTP-eEF1A_C"/>
</dbReference>
<dbReference type="InterPro" id="IPR027417">
    <property type="entry name" value="P-loop_NTPase"/>
</dbReference>
<dbReference type="InterPro" id="IPR000795">
    <property type="entry name" value="T_Tr_GTP-bd_dom"/>
</dbReference>
<dbReference type="InterPro" id="IPR050100">
    <property type="entry name" value="TRAFAC_GTPase_members"/>
</dbReference>
<dbReference type="InterPro" id="IPR009000">
    <property type="entry name" value="Transl_B-barrel_sf"/>
</dbReference>
<dbReference type="InterPro" id="IPR009001">
    <property type="entry name" value="Transl_elong_EF1A/Init_IF2_C"/>
</dbReference>
<dbReference type="InterPro" id="IPR004539">
    <property type="entry name" value="Transl_elong_EF1A_euk/arc"/>
</dbReference>
<dbReference type="NCBIfam" id="TIGR00483">
    <property type="entry name" value="EF-1_alpha"/>
    <property type="match status" value="1"/>
</dbReference>
<dbReference type="NCBIfam" id="NF008969">
    <property type="entry name" value="PRK12317.1"/>
    <property type="match status" value="1"/>
</dbReference>
<dbReference type="PANTHER" id="PTHR23115">
    <property type="entry name" value="TRANSLATION FACTOR"/>
    <property type="match status" value="1"/>
</dbReference>
<dbReference type="Pfam" id="PF22594">
    <property type="entry name" value="GTP-eEF1A_C"/>
    <property type="match status" value="1"/>
</dbReference>
<dbReference type="Pfam" id="PF00009">
    <property type="entry name" value="GTP_EFTU"/>
    <property type="match status" value="1"/>
</dbReference>
<dbReference type="Pfam" id="PF03144">
    <property type="entry name" value="GTP_EFTU_D2"/>
    <property type="match status" value="1"/>
</dbReference>
<dbReference type="PRINTS" id="PR00315">
    <property type="entry name" value="ELONGATNFCT"/>
</dbReference>
<dbReference type="SUPFAM" id="SSF50465">
    <property type="entry name" value="EF-Tu/eEF-1alpha/eIF2-gamma C-terminal domain"/>
    <property type="match status" value="1"/>
</dbReference>
<dbReference type="SUPFAM" id="SSF52540">
    <property type="entry name" value="P-loop containing nucleoside triphosphate hydrolases"/>
    <property type="match status" value="1"/>
</dbReference>
<dbReference type="SUPFAM" id="SSF50447">
    <property type="entry name" value="Translation proteins"/>
    <property type="match status" value="1"/>
</dbReference>
<dbReference type="PROSITE" id="PS00301">
    <property type="entry name" value="G_TR_1"/>
    <property type="match status" value="1"/>
</dbReference>
<dbReference type="PROSITE" id="PS51722">
    <property type="entry name" value="G_TR_2"/>
    <property type="match status" value="1"/>
</dbReference>
<accession>P0CN30</accession>
<accession>O42671</accession>
<accession>O42672</accession>
<accession>Q55IA3</accession>
<accession>Q5K7T9</accession>
<evidence type="ECO:0000250" key="1"/>
<evidence type="ECO:0000250" key="2">
    <source>
        <dbReference type="UniProtKB" id="P02994"/>
    </source>
</evidence>
<evidence type="ECO:0000305" key="3"/>
<sequence>MGKDKLHVNVVVIGHVDSGKSTTTGHLIYKCGGIDKRTIEKFEKEAQELGKSSFKYAWVLDKLKAERERGITIDIALWKFETPRYQVTVIDAPGHRDFIKNMITGTSQADCAILIIATGIGEFEAGISKDGQTREHALLAFTLGVRQLIVACNKMDTCKWSEDRFNEIVKETNGFIKKVGYNPKAVPFVPISGWHGDNMLEETTNMPWYKGWTKETKSGVSKGKTLLEAIDAIEPPTRPTDKPLRLPLQDVYKIGGIGTVPVGRVETGVIKAGMVVKFAPTNVTTEVKSVEMHHEQIPEGLPGDNVGFNVKNVSIKDIRRGNVCGDSKNDPPMEAASFNAQVIVLNHPGQIGAGYTPVLDCHTAHIACKFAELIEKIDRRTGKVMEAAPKFVKSGDAAIVKLVAQKPLCVETYADYPPLGRFAVRDMRQTVAVGVIKSVDKTEKGGKVTKAAEKAAKKK</sequence>
<name>EF1A_CRYNJ</name>